<evidence type="ECO:0000255" key="1">
    <source>
        <dbReference type="HAMAP-Rule" id="MF_00515"/>
    </source>
</evidence>
<proteinExistence type="inferred from homology"/>
<reference key="1">
    <citation type="journal article" date="2008" name="Genome Res.">
        <title>Comparative genome analysis of Salmonella enteritidis PT4 and Salmonella gallinarum 287/91 provides insights into evolutionary and host adaptation pathways.</title>
        <authorList>
            <person name="Thomson N.R."/>
            <person name="Clayton D.J."/>
            <person name="Windhorst D."/>
            <person name="Vernikos G."/>
            <person name="Davidson S."/>
            <person name="Churcher C."/>
            <person name="Quail M.A."/>
            <person name="Stevens M."/>
            <person name="Jones M.A."/>
            <person name="Watson M."/>
            <person name="Barron A."/>
            <person name="Layton A."/>
            <person name="Pickard D."/>
            <person name="Kingsley R.A."/>
            <person name="Bignell A."/>
            <person name="Clark L."/>
            <person name="Harris B."/>
            <person name="Ormond D."/>
            <person name="Abdellah Z."/>
            <person name="Brooks K."/>
            <person name="Cherevach I."/>
            <person name="Chillingworth T."/>
            <person name="Woodward J."/>
            <person name="Norberczak H."/>
            <person name="Lord A."/>
            <person name="Arrowsmith C."/>
            <person name="Jagels K."/>
            <person name="Moule S."/>
            <person name="Mungall K."/>
            <person name="Saunders M."/>
            <person name="Whitehead S."/>
            <person name="Chabalgoity J.A."/>
            <person name="Maskell D."/>
            <person name="Humphreys T."/>
            <person name="Roberts M."/>
            <person name="Barrow P.A."/>
            <person name="Dougan G."/>
            <person name="Parkhill J."/>
        </authorList>
    </citation>
    <scope>NUCLEOTIDE SEQUENCE [LARGE SCALE GENOMIC DNA]</scope>
    <source>
        <strain>287/91 / NCTC 13346</strain>
    </source>
</reference>
<organism>
    <name type="scientific">Salmonella gallinarum (strain 287/91 / NCTC 13346)</name>
    <dbReference type="NCBI Taxonomy" id="550538"/>
    <lineage>
        <taxon>Bacteria</taxon>
        <taxon>Pseudomonadati</taxon>
        <taxon>Pseudomonadota</taxon>
        <taxon>Gammaproteobacteria</taxon>
        <taxon>Enterobacterales</taxon>
        <taxon>Enterobacteriaceae</taxon>
        <taxon>Salmonella</taxon>
    </lineage>
</organism>
<sequence>MKYDLIIIGSGSVGAAAGYYATRAGLKVLMTDAHMPPHQQGSHHGDTRLIRHAYGEGEKYVPLMLRAQTLWDELSTHNEEPIFVRSGVVNLGPADSAFLANVARSAQQWQLNVERLDATALMTRWPEIRVPDNYIGLFEADSGFLRSELAITTWLRLAREAGCAQLFNSQVSHIHHDDNGVTIETSEGSYHASKALISAGTWVKALVPELPVQPVRKVFAWFKADGRYSTKNRFPAFTGEMPNGDQYYGFPAENDELKIGKHNGGQLIQAPEERKPFAAVASDGAEAFPFLRNVLPGIGGCLHGAACTYDNSPDENFIIDTLPGHENTLVITGLSGHGFKFAPVLGEIAADFALGKTSSFDLTPFRLSRFSQ</sequence>
<name>MTOX_SALG2</name>
<feature type="chain" id="PRO_1000127446" description="N-methyl-L-tryptophan oxidase">
    <location>
        <begin position="1"/>
        <end position="372"/>
    </location>
</feature>
<feature type="binding site" evidence="1">
    <location>
        <begin position="4"/>
        <end position="34"/>
    </location>
    <ligand>
        <name>FAD</name>
        <dbReference type="ChEBI" id="CHEBI:57692"/>
    </ligand>
</feature>
<feature type="modified residue" description="S-8alpha-FAD cysteine" evidence="1">
    <location>
        <position position="307"/>
    </location>
</feature>
<gene>
    <name evidence="1" type="primary">solA</name>
    <name type="ordered locus">SG1962</name>
</gene>
<comment type="function">
    <text evidence="1">Catalyzes the oxidative demethylation of N-methyl-L-tryptophan.</text>
</comment>
<comment type="catalytic activity">
    <reaction evidence="1">
        <text>N(alpha)-methyl-L-tryptophan + O2 + H2O = L-tryptophan + formaldehyde + H2O2</text>
        <dbReference type="Rhea" id="RHEA:28006"/>
        <dbReference type="ChEBI" id="CHEBI:15377"/>
        <dbReference type="ChEBI" id="CHEBI:15379"/>
        <dbReference type="ChEBI" id="CHEBI:16240"/>
        <dbReference type="ChEBI" id="CHEBI:16842"/>
        <dbReference type="ChEBI" id="CHEBI:57283"/>
        <dbReference type="ChEBI" id="CHEBI:57912"/>
    </reaction>
</comment>
<comment type="cofactor">
    <cofactor evidence="1">
        <name>FAD</name>
        <dbReference type="ChEBI" id="CHEBI:57692"/>
    </cofactor>
    <text evidence="1">Binds 1 FAD per subunit.</text>
</comment>
<comment type="subunit">
    <text evidence="1">Monomer.</text>
</comment>
<comment type="similarity">
    <text evidence="1">Belongs to the MSOX/MTOX family. MTOX subfamily.</text>
</comment>
<protein>
    <recommendedName>
        <fullName evidence="1">N-methyl-L-tryptophan oxidase</fullName>
        <shortName evidence="1">MTOX</shortName>
        <ecNumber evidence="1">1.5.3.-</ecNumber>
    </recommendedName>
</protein>
<dbReference type="EC" id="1.5.3.-" evidence="1"/>
<dbReference type="EMBL" id="AM933173">
    <property type="protein sequence ID" value="CAR37812.1"/>
    <property type="molecule type" value="Genomic_DNA"/>
</dbReference>
<dbReference type="RefSeq" id="WP_000872758.1">
    <property type="nucleotide sequence ID" value="NC_011274.1"/>
</dbReference>
<dbReference type="SMR" id="B5RBE0"/>
<dbReference type="KEGG" id="seg:SG1962"/>
<dbReference type="HOGENOM" id="CLU_007884_2_1_6"/>
<dbReference type="Proteomes" id="UP000008321">
    <property type="component" value="Chromosome"/>
</dbReference>
<dbReference type="GO" id="GO:0005829">
    <property type="term" value="C:cytosol"/>
    <property type="evidence" value="ECO:0007669"/>
    <property type="project" value="TreeGrafter"/>
</dbReference>
<dbReference type="GO" id="GO:0050660">
    <property type="term" value="F:flavin adenine dinucleotide binding"/>
    <property type="evidence" value="ECO:0007669"/>
    <property type="project" value="InterPro"/>
</dbReference>
<dbReference type="GO" id="GO:0050131">
    <property type="term" value="F:N-methyl-L-amino-acid oxidase activity"/>
    <property type="evidence" value="ECO:0007669"/>
    <property type="project" value="InterPro"/>
</dbReference>
<dbReference type="GO" id="GO:0008115">
    <property type="term" value="F:sarcosine oxidase activity"/>
    <property type="evidence" value="ECO:0007669"/>
    <property type="project" value="TreeGrafter"/>
</dbReference>
<dbReference type="Gene3D" id="3.30.9.10">
    <property type="entry name" value="D-Amino Acid Oxidase, subunit A, domain 2"/>
    <property type="match status" value="1"/>
</dbReference>
<dbReference type="Gene3D" id="3.50.50.60">
    <property type="entry name" value="FAD/NAD(P)-binding domain"/>
    <property type="match status" value="1"/>
</dbReference>
<dbReference type="HAMAP" id="MF_00515">
    <property type="entry name" value="MTOX"/>
    <property type="match status" value="1"/>
</dbReference>
<dbReference type="InterPro" id="IPR006076">
    <property type="entry name" value="FAD-dep_OxRdtase"/>
</dbReference>
<dbReference type="InterPro" id="IPR036188">
    <property type="entry name" value="FAD/NAD-bd_sf"/>
</dbReference>
<dbReference type="InterPro" id="IPR023493">
    <property type="entry name" value="Me_Trp_Oxase_MTOX"/>
</dbReference>
<dbReference type="InterPro" id="IPR045170">
    <property type="entry name" value="MTOX"/>
</dbReference>
<dbReference type="NCBIfam" id="NF008425">
    <property type="entry name" value="PRK11259.1"/>
    <property type="match status" value="1"/>
</dbReference>
<dbReference type="PANTHER" id="PTHR10961:SF7">
    <property type="entry name" value="FAD DEPENDENT OXIDOREDUCTASE DOMAIN-CONTAINING PROTEIN"/>
    <property type="match status" value="1"/>
</dbReference>
<dbReference type="PANTHER" id="PTHR10961">
    <property type="entry name" value="PEROXISOMAL SARCOSINE OXIDASE"/>
    <property type="match status" value="1"/>
</dbReference>
<dbReference type="Pfam" id="PF01266">
    <property type="entry name" value="DAO"/>
    <property type="match status" value="1"/>
</dbReference>
<dbReference type="SUPFAM" id="SSF54373">
    <property type="entry name" value="FAD-linked reductases, C-terminal domain"/>
    <property type="match status" value="1"/>
</dbReference>
<dbReference type="SUPFAM" id="SSF51905">
    <property type="entry name" value="FAD/NAD(P)-binding domain"/>
    <property type="match status" value="1"/>
</dbReference>
<accession>B5RBE0</accession>
<keyword id="KW-0274">FAD</keyword>
<keyword id="KW-0285">Flavoprotein</keyword>
<keyword id="KW-0560">Oxidoreductase</keyword>